<comment type="subcellular location">
    <subcellularLocation>
        <location evidence="1">Cytoplasm</location>
    </subcellularLocation>
</comment>
<comment type="similarity">
    <text evidence="1">Belongs to the UPF0298 family.</text>
</comment>
<gene>
    <name type="ordered locus">M28_Spy0318</name>
</gene>
<keyword id="KW-0963">Cytoplasm</keyword>
<feature type="chain" id="PRO_0000074680" description="UPF0298 protein M28_Spy0318">
    <location>
        <begin position="1"/>
        <end position="91"/>
    </location>
</feature>
<name>Y318_STRPM</name>
<evidence type="ECO:0000255" key="1">
    <source>
        <dbReference type="HAMAP-Rule" id="MF_01126"/>
    </source>
</evidence>
<organism>
    <name type="scientific">Streptococcus pyogenes serotype M28 (strain MGAS6180)</name>
    <dbReference type="NCBI Taxonomy" id="319701"/>
    <lineage>
        <taxon>Bacteria</taxon>
        <taxon>Bacillati</taxon>
        <taxon>Bacillota</taxon>
        <taxon>Bacilli</taxon>
        <taxon>Lactobacillales</taxon>
        <taxon>Streptococcaceae</taxon>
        <taxon>Streptococcus</taxon>
    </lineage>
</organism>
<dbReference type="EMBL" id="CP000056">
    <property type="protein sequence ID" value="AAX71432.1"/>
    <property type="molecule type" value="Genomic_DNA"/>
</dbReference>
<dbReference type="RefSeq" id="WP_011284533.1">
    <property type="nucleotide sequence ID" value="NC_007296.2"/>
</dbReference>
<dbReference type="SMR" id="Q48V24"/>
<dbReference type="KEGG" id="spb:M28_Spy0318"/>
<dbReference type="HOGENOM" id="CLU_159890_1_0_9"/>
<dbReference type="GO" id="GO:0005737">
    <property type="term" value="C:cytoplasm"/>
    <property type="evidence" value="ECO:0007669"/>
    <property type="project" value="UniProtKB-SubCell"/>
</dbReference>
<dbReference type="HAMAP" id="MF_01126">
    <property type="entry name" value="UPF0298"/>
    <property type="match status" value="1"/>
</dbReference>
<dbReference type="InterPro" id="IPR016979">
    <property type="entry name" value="DUF2129"/>
</dbReference>
<dbReference type="NCBIfam" id="NF002631">
    <property type="entry name" value="PRK02302.1"/>
    <property type="match status" value="1"/>
</dbReference>
<dbReference type="Pfam" id="PF09902">
    <property type="entry name" value="DUF2129"/>
    <property type="match status" value="1"/>
</dbReference>
<dbReference type="PIRSF" id="PIRSF031653">
    <property type="entry name" value="UCP031653"/>
    <property type="match status" value="1"/>
</dbReference>
<reference key="1">
    <citation type="journal article" date="2005" name="J. Infect. Dis.">
        <title>Genome sequence of a serotype M28 strain of group A Streptococcus: potential new insights into puerperal sepsis and bacterial disease specificity.</title>
        <authorList>
            <person name="Green N.M."/>
            <person name="Zhang S."/>
            <person name="Porcella S.F."/>
            <person name="Nagiec M.J."/>
            <person name="Barbian K.D."/>
            <person name="Beres S.B."/>
            <person name="Lefebvre R.B."/>
            <person name="Musser J.M."/>
        </authorList>
    </citation>
    <scope>NUCLEOTIDE SEQUENCE [LARGE SCALE GENOMIC DNA]</scope>
    <source>
        <strain>MGAS6180</strain>
    </source>
</reference>
<accession>Q48V24</accession>
<protein>
    <recommendedName>
        <fullName evidence="1">UPF0298 protein M28_Spy0318</fullName>
    </recommendedName>
</protein>
<sequence>MFQKQERIGLVVYLYYNRDARKLSKFGDLYYHSKRSRYLIVYINKNDLDTKLEEMRRLKCVKDIRPSAFDDIDRQFVGNLHRDETNNHQKG</sequence>
<proteinExistence type="inferred from homology"/>